<gene>
    <name evidence="1" type="primary">nusB</name>
    <name type="ordered locus">C8J_0357</name>
</gene>
<accession>A8FKG9</accession>
<evidence type="ECO:0000255" key="1">
    <source>
        <dbReference type="HAMAP-Rule" id="MF_00073"/>
    </source>
</evidence>
<sequence>MATRHQVRQSVISLLYAFELNSQNNVFVDEILDEKKIRNEQKNFTLNLYHGILDNLNNIDETLNSFLNDNQITALGHVERAILRLGAYELLFTDTPSAIVINEAIELAKELANDNSPKFINGVLDALIKAKK</sequence>
<name>NUSB_CAMJ8</name>
<protein>
    <recommendedName>
        <fullName evidence="1">Transcription antitermination protein NusB</fullName>
    </recommendedName>
    <alternativeName>
        <fullName evidence="1">Antitermination factor NusB</fullName>
    </alternativeName>
</protein>
<organism>
    <name type="scientific">Campylobacter jejuni subsp. jejuni serotype O:6 (strain 81116 / NCTC 11828)</name>
    <dbReference type="NCBI Taxonomy" id="407148"/>
    <lineage>
        <taxon>Bacteria</taxon>
        <taxon>Pseudomonadati</taxon>
        <taxon>Campylobacterota</taxon>
        <taxon>Epsilonproteobacteria</taxon>
        <taxon>Campylobacterales</taxon>
        <taxon>Campylobacteraceae</taxon>
        <taxon>Campylobacter</taxon>
    </lineage>
</organism>
<keyword id="KW-0694">RNA-binding</keyword>
<keyword id="KW-0804">Transcription</keyword>
<keyword id="KW-0889">Transcription antitermination</keyword>
<keyword id="KW-0805">Transcription regulation</keyword>
<feature type="chain" id="PRO_1000071190" description="Transcription antitermination protein NusB">
    <location>
        <begin position="1"/>
        <end position="132"/>
    </location>
</feature>
<proteinExistence type="inferred from homology"/>
<dbReference type="EMBL" id="CP000814">
    <property type="protein sequence ID" value="ABV51956.1"/>
    <property type="molecule type" value="Genomic_DNA"/>
</dbReference>
<dbReference type="RefSeq" id="WP_002854405.1">
    <property type="nucleotide sequence ID" value="NC_009839.1"/>
</dbReference>
<dbReference type="SMR" id="A8FKG9"/>
<dbReference type="KEGG" id="cju:C8J_0357"/>
<dbReference type="HOGENOM" id="CLU_087843_3_3_7"/>
<dbReference type="GO" id="GO:0005829">
    <property type="term" value="C:cytosol"/>
    <property type="evidence" value="ECO:0007669"/>
    <property type="project" value="TreeGrafter"/>
</dbReference>
<dbReference type="GO" id="GO:0003723">
    <property type="term" value="F:RNA binding"/>
    <property type="evidence" value="ECO:0007669"/>
    <property type="project" value="UniProtKB-UniRule"/>
</dbReference>
<dbReference type="GO" id="GO:0006353">
    <property type="term" value="P:DNA-templated transcription termination"/>
    <property type="evidence" value="ECO:0007669"/>
    <property type="project" value="UniProtKB-UniRule"/>
</dbReference>
<dbReference type="GO" id="GO:0031564">
    <property type="term" value="P:transcription antitermination"/>
    <property type="evidence" value="ECO:0007669"/>
    <property type="project" value="UniProtKB-KW"/>
</dbReference>
<dbReference type="Gene3D" id="1.10.940.10">
    <property type="entry name" value="NusB-like"/>
    <property type="match status" value="1"/>
</dbReference>
<dbReference type="HAMAP" id="MF_00073">
    <property type="entry name" value="NusB"/>
    <property type="match status" value="1"/>
</dbReference>
<dbReference type="InterPro" id="IPR035926">
    <property type="entry name" value="NusB-like_sf"/>
</dbReference>
<dbReference type="InterPro" id="IPR011605">
    <property type="entry name" value="NusB_fam"/>
</dbReference>
<dbReference type="InterPro" id="IPR006027">
    <property type="entry name" value="NusB_RsmB_TIM44"/>
</dbReference>
<dbReference type="NCBIfam" id="TIGR01951">
    <property type="entry name" value="nusB"/>
    <property type="match status" value="1"/>
</dbReference>
<dbReference type="PANTHER" id="PTHR11078:SF3">
    <property type="entry name" value="ANTITERMINATION NUSB DOMAIN-CONTAINING PROTEIN"/>
    <property type="match status" value="1"/>
</dbReference>
<dbReference type="PANTHER" id="PTHR11078">
    <property type="entry name" value="N UTILIZATION SUBSTANCE PROTEIN B-RELATED"/>
    <property type="match status" value="1"/>
</dbReference>
<dbReference type="Pfam" id="PF01029">
    <property type="entry name" value="NusB"/>
    <property type="match status" value="1"/>
</dbReference>
<dbReference type="SUPFAM" id="SSF48013">
    <property type="entry name" value="NusB-like"/>
    <property type="match status" value="1"/>
</dbReference>
<reference key="1">
    <citation type="journal article" date="2007" name="J. Bacteriol.">
        <title>The complete genome sequence of Campylobacter jejuni strain 81116 (NCTC11828).</title>
        <authorList>
            <person name="Pearson B.M."/>
            <person name="Gaskin D.J.H."/>
            <person name="Segers R.P.A.M."/>
            <person name="Wells J.M."/>
            <person name="Nuijten P.J.M."/>
            <person name="van Vliet A.H.M."/>
        </authorList>
    </citation>
    <scope>NUCLEOTIDE SEQUENCE [LARGE SCALE GENOMIC DNA]</scope>
    <source>
        <strain>81116 / NCTC 11828</strain>
    </source>
</reference>
<comment type="function">
    <text evidence="1">Involved in transcription antitermination. Required for transcription of ribosomal RNA (rRNA) genes. Binds specifically to the boxA antiterminator sequence of the ribosomal RNA (rrn) operons.</text>
</comment>
<comment type="similarity">
    <text evidence="1">Belongs to the NusB family.</text>
</comment>